<dbReference type="EMBL" id="AF232215">
    <property type="protein sequence ID" value="AAG39689.1"/>
    <property type="molecule type" value="mRNA"/>
</dbReference>
<dbReference type="RefSeq" id="XP_055776199.1">
    <property type="nucleotide sequence ID" value="XM_055920224.1"/>
</dbReference>
<dbReference type="SMR" id="Q9DE06"/>
<dbReference type="GeneID" id="129853810"/>
<dbReference type="UniPathway" id="UPA00296"/>
<dbReference type="GO" id="GO:0005739">
    <property type="term" value="C:mitochondrion"/>
    <property type="evidence" value="ECO:0007669"/>
    <property type="project" value="UniProtKB-SubCell"/>
</dbReference>
<dbReference type="GO" id="GO:0015485">
    <property type="term" value="F:cholesterol binding"/>
    <property type="evidence" value="ECO:0007669"/>
    <property type="project" value="InterPro"/>
</dbReference>
<dbReference type="GO" id="GO:0120020">
    <property type="term" value="F:cholesterol transfer activity"/>
    <property type="evidence" value="ECO:0007669"/>
    <property type="project" value="InterPro"/>
</dbReference>
<dbReference type="GO" id="GO:0008203">
    <property type="term" value="P:cholesterol metabolic process"/>
    <property type="evidence" value="ECO:0007669"/>
    <property type="project" value="UniProtKB-UniPathway"/>
</dbReference>
<dbReference type="GO" id="GO:0032367">
    <property type="term" value="P:intracellular cholesterol transport"/>
    <property type="evidence" value="ECO:0007669"/>
    <property type="project" value="TreeGrafter"/>
</dbReference>
<dbReference type="GO" id="GO:0050810">
    <property type="term" value="P:regulation of steroid biosynthetic process"/>
    <property type="evidence" value="ECO:0007669"/>
    <property type="project" value="TreeGrafter"/>
</dbReference>
<dbReference type="GO" id="GO:0006694">
    <property type="term" value="P:steroid biosynthetic process"/>
    <property type="evidence" value="ECO:0007669"/>
    <property type="project" value="UniProtKB-KW"/>
</dbReference>
<dbReference type="CDD" id="cd08905">
    <property type="entry name" value="START_STARD1-like"/>
    <property type="match status" value="1"/>
</dbReference>
<dbReference type="FunFam" id="3.30.530.20:FF:000015">
    <property type="entry name" value="Steroidogenic acute regulatory protein, mitochondrial"/>
    <property type="match status" value="1"/>
</dbReference>
<dbReference type="Gene3D" id="3.30.530.20">
    <property type="match status" value="1"/>
</dbReference>
<dbReference type="InterPro" id="IPR029866">
    <property type="entry name" value="StAR"/>
</dbReference>
<dbReference type="InterPro" id="IPR000799">
    <property type="entry name" value="StAR-like"/>
</dbReference>
<dbReference type="InterPro" id="IPR023393">
    <property type="entry name" value="START-like_dom_sf"/>
</dbReference>
<dbReference type="InterPro" id="IPR002913">
    <property type="entry name" value="START_lipid-bd_dom"/>
</dbReference>
<dbReference type="PANTHER" id="PTHR46489">
    <property type="entry name" value="STEROIDOGENIC ACUTE REGULATORY PROTEIN, MITOCHONDRIAL"/>
    <property type="match status" value="1"/>
</dbReference>
<dbReference type="PANTHER" id="PTHR46489:SF3">
    <property type="entry name" value="STEROIDOGENIC ACUTE REGULATORY PROTEIN, MITOCHONDRIAL"/>
    <property type="match status" value="1"/>
</dbReference>
<dbReference type="Pfam" id="PF01852">
    <property type="entry name" value="START"/>
    <property type="match status" value="1"/>
</dbReference>
<dbReference type="PRINTS" id="PR00978">
    <property type="entry name" value="STARPROTEIN"/>
</dbReference>
<dbReference type="SMART" id="SM00234">
    <property type="entry name" value="START"/>
    <property type="match status" value="1"/>
</dbReference>
<dbReference type="SUPFAM" id="SSF55961">
    <property type="entry name" value="Bet v1-like"/>
    <property type="match status" value="1"/>
</dbReference>
<dbReference type="PROSITE" id="PS50848">
    <property type="entry name" value="START"/>
    <property type="match status" value="1"/>
</dbReference>
<reference key="1">
    <citation type="submission" date="2000-02" db="EMBL/GenBank/DDBJ databases">
        <title>Characterization of the brook trout StAR and MLN64 homologs.</title>
        <authorList>
            <person name="Goetz F.W."/>
        </authorList>
    </citation>
    <scope>NUCLEOTIDE SEQUENCE [MRNA]</scope>
    <source>
        <tissue>Brain</tissue>
    </source>
</reference>
<proteinExistence type="evidence at transcript level"/>
<feature type="transit peptide" description="Mitochondrion" evidence="1">
    <location>
        <begin position="1"/>
        <end position="61"/>
    </location>
</feature>
<feature type="chain" id="PRO_0000033325" description="Steroidogenic acute regulatory protein, mitochondrial">
    <location>
        <begin position="62"/>
        <end position="287"/>
    </location>
</feature>
<feature type="domain" description="START" evidence="5">
    <location>
        <begin position="66"/>
        <end position="279"/>
    </location>
</feature>
<organism>
    <name type="scientific">Salvelinus fontinalis</name>
    <name type="common">Brook trout</name>
    <name type="synonym">Salmo fontinalis</name>
    <dbReference type="NCBI Taxonomy" id="8038"/>
    <lineage>
        <taxon>Eukaryota</taxon>
        <taxon>Metazoa</taxon>
        <taxon>Chordata</taxon>
        <taxon>Craniata</taxon>
        <taxon>Vertebrata</taxon>
        <taxon>Euteleostomi</taxon>
        <taxon>Actinopterygii</taxon>
        <taxon>Neopterygii</taxon>
        <taxon>Teleostei</taxon>
        <taxon>Protacanthopterygii</taxon>
        <taxon>Salmoniformes</taxon>
        <taxon>Salmonidae</taxon>
        <taxon>Salmoninae</taxon>
        <taxon>Salvelinus</taxon>
    </lineage>
</organism>
<gene>
    <name type="primary">star</name>
</gene>
<evidence type="ECO:0000250" key="1"/>
<evidence type="ECO:0000250" key="2">
    <source>
        <dbReference type="UniProtKB" id="P49675"/>
    </source>
</evidence>
<evidence type="ECO:0000250" key="3">
    <source>
        <dbReference type="UniProtKB" id="P51557"/>
    </source>
</evidence>
<evidence type="ECO:0000250" key="4">
    <source>
        <dbReference type="UniProtKB" id="P79245"/>
    </source>
</evidence>
<evidence type="ECO:0000255" key="5">
    <source>
        <dbReference type="PROSITE-ProRule" id="PRU00197"/>
    </source>
</evidence>
<name>STAR_SALFO</name>
<keyword id="KW-0445">Lipid transport</keyword>
<keyword id="KW-0446">Lipid-binding</keyword>
<keyword id="KW-0496">Mitochondrion</keyword>
<keyword id="KW-0755">Steroidogenesis</keyword>
<keyword id="KW-0809">Transit peptide</keyword>
<keyword id="KW-0813">Transport</keyword>
<comment type="function">
    <text evidence="2">Plays a key role in steroid hormone synthesis by enhancing the metabolism of cholesterol into pregnenolone. Mediates the transfer of cholesterol from the outer mitochondrial membrane to the inner mitochondrial membrane where it is cleaved to pregnenolone (By similarity).</text>
</comment>
<comment type="catalytic activity">
    <reaction evidence="2">
        <text>cholesterol(in) = cholesterol(out)</text>
        <dbReference type="Rhea" id="RHEA:39747"/>
        <dbReference type="ChEBI" id="CHEBI:16113"/>
    </reaction>
</comment>
<comment type="pathway">
    <text evidence="2">Steroid metabolism; cholesterol metabolism.</text>
</comment>
<comment type="subunit">
    <text evidence="4">May interact with TSPO.</text>
</comment>
<comment type="subcellular location">
    <subcellularLocation>
        <location evidence="3">Mitochondrion</location>
    </subcellularLocation>
</comment>
<protein>
    <recommendedName>
        <fullName>Steroidogenic acute regulatory protein, mitochondrial</fullName>
        <shortName>StAR</shortName>
    </recommendedName>
    <alternativeName>
        <fullName>START domain-containing protein 1</fullName>
        <shortName>StARD1</shortName>
    </alternativeName>
</protein>
<accession>Q9DE06</accession>
<sequence>MLPATFKLCAGISYRHTRNMTGLRKNAMVAIHHELNMLAGPNPSSWISHVRRRSSLLSSRIEEEQGYNEAEVSYVKQGEEALQKSISILGDQDGWTTEIIAANGDKVLSKVLPDVGKVFKLEVLLDQRSDNLYGELVGNMEQMGDWNPNVKEVKILQKIGQETMVTHEVSGPTPGNVVGPRDFVSVRCAKRRGSTCFLAGMSTQHPTMPEQRGVVRAENGPTCIVMRPSADDPNKTKFTWLLSIDLKGWIPKTIINKVLSQTQVDFANHLRQRMADNSVSKEMAPAC</sequence>